<keyword id="KW-0210">Decarboxylase</keyword>
<keyword id="KW-0456">Lyase</keyword>
<keyword id="KW-0460">Magnesium</keyword>
<keyword id="KW-0479">Metal-binding</keyword>
<keyword id="KW-0786">Thiamine pyrophosphate</keyword>
<name>KDC_MYCUA</name>
<sequence length="566" mass="60326">MTLLENDAATDPVYTVGDYLLDRLAELGVSEIFGVPGDYNLEFLDHIVAHPIIRWVGSANELNAGYAADGYGRLRGMSAVVTTFGVGELSATNAIAGSYAEHVPVVHIVGGPSKDAQGARRALHHSLGDGDFEHFFRISREITCAQANLMPATACREIDRVICEVREQKRPGYLLLSTDVARFPTEPPGAPLPPLAGGTSPRALSLFTRAAADLIGDHQLTVLADLLVHRLQAIKELEALLSADVVPHATLMWGKSLLDESSANFLGIYAGAASAEPVRKAIEQAPVLVTAGVVFTDMVSGFFSQRIDPARTIDIGQYQSSVADQVFAPLEMGAALQAVATILTKRGISSPPVAVPPAEPGPPTPRRDEPLNQEMLWNRLCEALTPGNVVLADQGTSFYGMADHRLPQGVTFIGQPLWGSIGYTLPAALGAAVAHPDRRTVLLIGDGAAQLTVQELGIFSREGLSPVIVVVNNDGYTVERAIHGETATYNDIVSWRWTDVPGALGVTNHLAMRAENYGELDDALTAAAEQQDRMVVVEAVLPRLDVPPLLDELVGSLSPPECGGRS</sequence>
<organism>
    <name type="scientific">Mycobacterium ulcerans (strain Agy99)</name>
    <dbReference type="NCBI Taxonomy" id="362242"/>
    <lineage>
        <taxon>Bacteria</taxon>
        <taxon>Bacillati</taxon>
        <taxon>Actinomycetota</taxon>
        <taxon>Actinomycetes</taxon>
        <taxon>Mycobacteriales</taxon>
        <taxon>Mycobacteriaceae</taxon>
        <taxon>Mycobacterium</taxon>
        <taxon>Mycobacterium ulcerans group</taxon>
    </lineage>
</organism>
<feature type="chain" id="PRO_0000333753" description="Alpha-keto-acid decarboxylase">
    <location>
        <begin position="1"/>
        <end position="566"/>
    </location>
</feature>
<feature type="region of interest" description="Thiamine pyrophosphate binding" evidence="1">
    <location>
        <begin position="396"/>
        <end position="478"/>
    </location>
</feature>
<feature type="binding site" evidence="1">
    <location>
        <position position="61"/>
    </location>
    <ligand>
        <name>thiamine diphosphate</name>
        <dbReference type="ChEBI" id="CHEBI:58937"/>
    </ligand>
</feature>
<feature type="binding site" evidence="1">
    <location>
        <position position="446"/>
    </location>
    <ligand>
        <name>Mg(2+)</name>
        <dbReference type="ChEBI" id="CHEBI:18420"/>
    </ligand>
</feature>
<feature type="binding site" evidence="1">
    <location>
        <position position="473"/>
    </location>
    <ligand>
        <name>Mg(2+)</name>
        <dbReference type="ChEBI" id="CHEBI:18420"/>
    </ligand>
</feature>
<feature type="binding site" evidence="1">
    <location>
        <position position="475"/>
    </location>
    <ligand>
        <name>Mg(2+)</name>
        <dbReference type="ChEBI" id="CHEBI:18420"/>
    </ligand>
</feature>
<reference key="1">
    <citation type="journal article" date="2007" name="Genome Res.">
        <title>Reductive evolution and niche adaptation inferred from the genome of Mycobacterium ulcerans, the causative agent of Buruli ulcer.</title>
        <authorList>
            <person name="Stinear T.P."/>
            <person name="Seemann T."/>
            <person name="Pidot S."/>
            <person name="Frigui W."/>
            <person name="Reysset G."/>
            <person name="Garnier T."/>
            <person name="Meurice G."/>
            <person name="Simon D."/>
            <person name="Bouchier C."/>
            <person name="Ma L."/>
            <person name="Tichit M."/>
            <person name="Porter J.L."/>
            <person name="Ryan J."/>
            <person name="Johnson P.D.R."/>
            <person name="Davies J.K."/>
            <person name="Jenkin G.A."/>
            <person name="Small P.L.C."/>
            <person name="Jones L.M."/>
            <person name="Tekaia F."/>
            <person name="Laval F."/>
            <person name="Daffe M."/>
            <person name="Parkhill J."/>
            <person name="Cole S.T."/>
        </authorList>
    </citation>
    <scope>NUCLEOTIDE SEQUENCE [LARGE SCALE GENOMIC DNA]</scope>
    <source>
        <strain>Agy99</strain>
    </source>
</reference>
<proteinExistence type="inferred from homology"/>
<gene>
    <name type="primary">kdc</name>
    <name type="ordered locus">MUL_0302</name>
</gene>
<dbReference type="EC" id="4.1.1.-"/>
<dbReference type="EMBL" id="CP000325">
    <property type="protein sequence ID" value="ABL03035.1"/>
    <property type="molecule type" value="Genomic_DNA"/>
</dbReference>
<dbReference type="RefSeq" id="WP_011738660.1">
    <property type="nucleotide sequence ID" value="NC_008611.1"/>
</dbReference>
<dbReference type="SMR" id="A0PL16"/>
<dbReference type="KEGG" id="mul:MUL_0302"/>
<dbReference type="eggNOG" id="COG3961">
    <property type="taxonomic scope" value="Bacteria"/>
</dbReference>
<dbReference type="HOGENOM" id="CLU_013748_0_2_11"/>
<dbReference type="Proteomes" id="UP000000765">
    <property type="component" value="Chromosome"/>
</dbReference>
<dbReference type="GO" id="GO:0005829">
    <property type="term" value="C:cytosol"/>
    <property type="evidence" value="ECO:0007669"/>
    <property type="project" value="TreeGrafter"/>
</dbReference>
<dbReference type="GO" id="GO:0000287">
    <property type="term" value="F:magnesium ion binding"/>
    <property type="evidence" value="ECO:0007669"/>
    <property type="project" value="InterPro"/>
</dbReference>
<dbReference type="GO" id="GO:0004737">
    <property type="term" value="F:pyruvate decarboxylase activity"/>
    <property type="evidence" value="ECO:0007669"/>
    <property type="project" value="TreeGrafter"/>
</dbReference>
<dbReference type="GO" id="GO:0030976">
    <property type="term" value="F:thiamine pyrophosphate binding"/>
    <property type="evidence" value="ECO:0007669"/>
    <property type="project" value="InterPro"/>
</dbReference>
<dbReference type="GO" id="GO:0000949">
    <property type="term" value="P:aromatic amino acid family catabolic process to alcohol via Ehrlich pathway"/>
    <property type="evidence" value="ECO:0007669"/>
    <property type="project" value="TreeGrafter"/>
</dbReference>
<dbReference type="CDD" id="cd02005">
    <property type="entry name" value="TPP_PDC_IPDC"/>
    <property type="match status" value="1"/>
</dbReference>
<dbReference type="CDD" id="cd07038">
    <property type="entry name" value="TPP_PYR_PDC_IPDC_like"/>
    <property type="match status" value="1"/>
</dbReference>
<dbReference type="FunFam" id="3.40.50.970:FF:000019">
    <property type="entry name" value="Pyruvate decarboxylase isozyme"/>
    <property type="match status" value="1"/>
</dbReference>
<dbReference type="FunFam" id="3.40.50.970:FF:000024">
    <property type="entry name" value="Pyruvate decarboxylase isozyme"/>
    <property type="match status" value="1"/>
</dbReference>
<dbReference type="Gene3D" id="3.40.50.970">
    <property type="match status" value="2"/>
</dbReference>
<dbReference type="Gene3D" id="3.40.50.1220">
    <property type="entry name" value="TPP-binding domain"/>
    <property type="match status" value="1"/>
</dbReference>
<dbReference type="InterPro" id="IPR029035">
    <property type="entry name" value="DHS-like_NAD/FAD-binding_dom"/>
</dbReference>
<dbReference type="InterPro" id="IPR012110">
    <property type="entry name" value="PDC/IPDC-like"/>
</dbReference>
<dbReference type="InterPro" id="IPR029061">
    <property type="entry name" value="THDP-binding"/>
</dbReference>
<dbReference type="InterPro" id="IPR012000">
    <property type="entry name" value="Thiamin_PyroP_enz_cen_dom"/>
</dbReference>
<dbReference type="InterPro" id="IPR012001">
    <property type="entry name" value="Thiamin_PyroP_enz_TPP-bd_dom"/>
</dbReference>
<dbReference type="InterPro" id="IPR000399">
    <property type="entry name" value="TPP-bd_CS"/>
</dbReference>
<dbReference type="InterPro" id="IPR011766">
    <property type="entry name" value="TPP_enzyme_TPP-bd"/>
</dbReference>
<dbReference type="InterPro" id="IPR047214">
    <property type="entry name" value="TPP_PDC_IPDC"/>
</dbReference>
<dbReference type="InterPro" id="IPR047213">
    <property type="entry name" value="TPP_PYR_PDC_IPDC-like"/>
</dbReference>
<dbReference type="PANTHER" id="PTHR43452">
    <property type="entry name" value="PYRUVATE DECARBOXYLASE"/>
    <property type="match status" value="1"/>
</dbReference>
<dbReference type="PANTHER" id="PTHR43452:SF30">
    <property type="entry name" value="PYRUVATE DECARBOXYLASE ISOZYME 1-RELATED"/>
    <property type="match status" value="1"/>
</dbReference>
<dbReference type="Pfam" id="PF02775">
    <property type="entry name" value="TPP_enzyme_C"/>
    <property type="match status" value="1"/>
</dbReference>
<dbReference type="Pfam" id="PF00205">
    <property type="entry name" value="TPP_enzyme_M"/>
    <property type="match status" value="1"/>
</dbReference>
<dbReference type="Pfam" id="PF02776">
    <property type="entry name" value="TPP_enzyme_N"/>
    <property type="match status" value="1"/>
</dbReference>
<dbReference type="PIRSF" id="PIRSF036565">
    <property type="entry name" value="Pyruvt_ip_decrb"/>
    <property type="match status" value="1"/>
</dbReference>
<dbReference type="SUPFAM" id="SSF52467">
    <property type="entry name" value="DHS-like NAD/FAD-binding domain"/>
    <property type="match status" value="1"/>
</dbReference>
<dbReference type="SUPFAM" id="SSF52518">
    <property type="entry name" value="Thiamin diphosphate-binding fold (THDP-binding)"/>
    <property type="match status" value="2"/>
</dbReference>
<dbReference type="PROSITE" id="PS00187">
    <property type="entry name" value="TPP_ENZYMES"/>
    <property type="match status" value="1"/>
</dbReference>
<protein>
    <recommendedName>
        <fullName>Alpha-keto-acid decarboxylase</fullName>
        <shortName>KDC</shortName>
        <ecNumber>4.1.1.-</ecNumber>
    </recommendedName>
</protein>
<evidence type="ECO:0000250" key="1"/>
<evidence type="ECO:0000305" key="2"/>
<comment type="function">
    <text>Decarboxylates branched-chain and aromatic alpha-keto acids to aldehydes.</text>
</comment>
<comment type="cofactor">
    <cofactor evidence="1">
        <name>a metal cation</name>
        <dbReference type="ChEBI" id="CHEBI:25213"/>
    </cofactor>
    <text evidence="1">Binds 1 metal ion per subunit.</text>
</comment>
<comment type="cofactor">
    <cofactor evidence="1">
        <name>thiamine diphosphate</name>
        <dbReference type="ChEBI" id="CHEBI:58937"/>
    </cofactor>
    <text evidence="1">Binds 1 thiamine pyrophosphate per subunit.</text>
</comment>
<comment type="similarity">
    <text evidence="2">Belongs to the TPP enzyme family.</text>
</comment>
<accession>A0PL16</accession>